<sequence length="333" mass="36820">MNQWMELAERVLDGGEVTEKEALSILECPDDDVLLLMHAAFQIRKRYYGKKVKLNMIMNAKSGLCPENCGYCSQSSISKAPIDSYRMVDKTTLLEGAKRAHDLNIGTYCIVASGRGPSNREVDQVVDAVKEIKETYGLKICACLGLLKPGQAERLKEAGVDRYNHNINTSKTNHSNITTSHTYDDRVNTVETAKKSGMSPCSGVIVGMKETKQDVVDMAKSLKALDADSIPVNFLHAIDGTPLEGVNELNPLYCLKVLALFRFINPTKEIRISGGREVNLRSLQPLGLYAANSIFVGDYLTTAGQNETEDHKMLHDLGFEVESVEEMKASLQR</sequence>
<evidence type="ECO:0000255" key="1">
    <source>
        <dbReference type="HAMAP-Rule" id="MF_01694"/>
    </source>
</evidence>
<evidence type="ECO:0000255" key="2">
    <source>
        <dbReference type="PROSITE-ProRule" id="PRU01266"/>
    </source>
</evidence>
<comment type="function">
    <text evidence="1">Catalyzes the conversion of dethiobiotin (DTB) to biotin by the insertion of a sulfur atom into dethiobiotin via a radical-based mechanism.</text>
</comment>
<comment type="catalytic activity">
    <reaction evidence="1">
        <text>(4R,5S)-dethiobiotin + (sulfur carrier)-SH + 2 reduced [2Fe-2S]-[ferredoxin] + 2 S-adenosyl-L-methionine = (sulfur carrier)-H + biotin + 2 5'-deoxyadenosine + 2 L-methionine + 2 oxidized [2Fe-2S]-[ferredoxin]</text>
        <dbReference type="Rhea" id="RHEA:22060"/>
        <dbReference type="Rhea" id="RHEA-COMP:10000"/>
        <dbReference type="Rhea" id="RHEA-COMP:10001"/>
        <dbReference type="Rhea" id="RHEA-COMP:14737"/>
        <dbReference type="Rhea" id="RHEA-COMP:14739"/>
        <dbReference type="ChEBI" id="CHEBI:17319"/>
        <dbReference type="ChEBI" id="CHEBI:29917"/>
        <dbReference type="ChEBI" id="CHEBI:33737"/>
        <dbReference type="ChEBI" id="CHEBI:33738"/>
        <dbReference type="ChEBI" id="CHEBI:57586"/>
        <dbReference type="ChEBI" id="CHEBI:57844"/>
        <dbReference type="ChEBI" id="CHEBI:59789"/>
        <dbReference type="ChEBI" id="CHEBI:64428"/>
        <dbReference type="ChEBI" id="CHEBI:149473"/>
        <dbReference type="EC" id="2.8.1.6"/>
    </reaction>
</comment>
<comment type="cofactor">
    <cofactor evidence="1">
        <name>[4Fe-4S] cluster</name>
        <dbReference type="ChEBI" id="CHEBI:49883"/>
    </cofactor>
    <text evidence="1">Binds 1 [4Fe-4S] cluster. The cluster is coordinated with 3 cysteines and an exchangeable S-adenosyl-L-methionine.</text>
</comment>
<comment type="cofactor">
    <cofactor evidence="1">
        <name>[2Fe-2S] cluster</name>
        <dbReference type="ChEBI" id="CHEBI:190135"/>
    </cofactor>
    <text evidence="1">Binds 1 [2Fe-2S] cluster. The cluster is coordinated with 3 cysteines and 1 arginine.</text>
</comment>
<comment type="pathway">
    <text evidence="1">Cofactor biosynthesis; biotin biosynthesis; biotin from 7,8-diaminononanoate: step 2/2.</text>
</comment>
<comment type="subunit">
    <text evidence="1">Homodimer.</text>
</comment>
<comment type="similarity">
    <text evidence="1">Belongs to the radical SAM superfamily. Biotin synthase family.</text>
</comment>
<keyword id="KW-0001">2Fe-2S</keyword>
<keyword id="KW-0004">4Fe-4S</keyword>
<keyword id="KW-0093">Biotin biosynthesis</keyword>
<keyword id="KW-0408">Iron</keyword>
<keyword id="KW-0411">Iron-sulfur</keyword>
<keyword id="KW-0479">Metal-binding</keyword>
<keyword id="KW-1185">Reference proteome</keyword>
<keyword id="KW-0949">S-adenosyl-L-methionine</keyword>
<keyword id="KW-0808">Transferase</keyword>
<feature type="chain" id="PRO_0000381231" description="Biotin synthase">
    <location>
        <begin position="1"/>
        <end position="333"/>
    </location>
</feature>
<feature type="domain" description="Radical SAM core" evidence="2">
    <location>
        <begin position="47"/>
        <end position="276"/>
    </location>
</feature>
<feature type="binding site" evidence="1">
    <location>
        <position position="65"/>
    </location>
    <ligand>
        <name>[4Fe-4S] cluster</name>
        <dbReference type="ChEBI" id="CHEBI:49883"/>
        <note>4Fe-4S-S-AdoMet</note>
    </ligand>
</feature>
<feature type="binding site" evidence="1">
    <location>
        <position position="69"/>
    </location>
    <ligand>
        <name>[4Fe-4S] cluster</name>
        <dbReference type="ChEBI" id="CHEBI:49883"/>
        <note>4Fe-4S-S-AdoMet</note>
    </ligand>
</feature>
<feature type="binding site" evidence="1">
    <location>
        <position position="72"/>
    </location>
    <ligand>
        <name>[4Fe-4S] cluster</name>
        <dbReference type="ChEBI" id="CHEBI:49883"/>
        <note>4Fe-4S-S-AdoMet</note>
    </ligand>
</feature>
<feature type="binding site" evidence="1">
    <location>
        <position position="109"/>
    </location>
    <ligand>
        <name>[2Fe-2S] cluster</name>
        <dbReference type="ChEBI" id="CHEBI:190135"/>
    </ligand>
</feature>
<feature type="binding site" evidence="1">
    <location>
        <position position="141"/>
    </location>
    <ligand>
        <name>[2Fe-2S] cluster</name>
        <dbReference type="ChEBI" id="CHEBI:190135"/>
    </ligand>
</feature>
<feature type="binding site" evidence="1">
    <location>
        <position position="201"/>
    </location>
    <ligand>
        <name>[2Fe-2S] cluster</name>
        <dbReference type="ChEBI" id="CHEBI:190135"/>
    </ligand>
</feature>
<feature type="binding site" evidence="1">
    <location>
        <position position="271"/>
    </location>
    <ligand>
        <name>[2Fe-2S] cluster</name>
        <dbReference type="ChEBI" id="CHEBI:190135"/>
    </ligand>
</feature>
<dbReference type="EC" id="2.8.1.6" evidence="1"/>
<dbReference type="EMBL" id="CP000002">
    <property type="protein sequence ID" value="AAU22356.1"/>
    <property type="molecule type" value="Genomic_DNA"/>
</dbReference>
<dbReference type="EMBL" id="AE017333">
    <property type="protein sequence ID" value="AAU39705.1"/>
    <property type="molecule type" value="Genomic_DNA"/>
</dbReference>
<dbReference type="RefSeq" id="WP_003179696.1">
    <property type="nucleotide sequence ID" value="NC_006322.1"/>
</dbReference>
<dbReference type="SMR" id="Q65MK9"/>
<dbReference type="STRING" id="279010.BL00956"/>
<dbReference type="GeneID" id="92862648"/>
<dbReference type="KEGG" id="bld:BLi00770"/>
<dbReference type="KEGG" id="bli:BL00956"/>
<dbReference type="eggNOG" id="COG0502">
    <property type="taxonomic scope" value="Bacteria"/>
</dbReference>
<dbReference type="HOGENOM" id="CLU_033172_2_1_9"/>
<dbReference type="UniPathway" id="UPA00078">
    <property type="reaction ID" value="UER00162"/>
</dbReference>
<dbReference type="Proteomes" id="UP000000606">
    <property type="component" value="Chromosome"/>
</dbReference>
<dbReference type="GO" id="GO:0051537">
    <property type="term" value="F:2 iron, 2 sulfur cluster binding"/>
    <property type="evidence" value="ECO:0007669"/>
    <property type="project" value="UniProtKB-KW"/>
</dbReference>
<dbReference type="GO" id="GO:0051539">
    <property type="term" value="F:4 iron, 4 sulfur cluster binding"/>
    <property type="evidence" value="ECO:0007669"/>
    <property type="project" value="UniProtKB-KW"/>
</dbReference>
<dbReference type="GO" id="GO:0004076">
    <property type="term" value="F:biotin synthase activity"/>
    <property type="evidence" value="ECO:0007669"/>
    <property type="project" value="UniProtKB-UniRule"/>
</dbReference>
<dbReference type="GO" id="GO:0005506">
    <property type="term" value="F:iron ion binding"/>
    <property type="evidence" value="ECO:0007669"/>
    <property type="project" value="UniProtKB-UniRule"/>
</dbReference>
<dbReference type="GO" id="GO:0009102">
    <property type="term" value="P:biotin biosynthetic process"/>
    <property type="evidence" value="ECO:0007669"/>
    <property type="project" value="UniProtKB-UniRule"/>
</dbReference>
<dbReference type="CDD" id="cd01335">
    <property type="entry name" value="Radical_SAM"/>
    <property type="match status" value="1"/>
</dbReference>
<dbReference type="FunFam" id="3.20.20.70:FF:000026">
    <property type="entry name" value="Biotin synthase"/>
    <property type="match status" value="1"/>
</dbReference>
<dbReference type="Gene3D" id="3.20.20.70">
    <property type="entry name" value="Aldolase class I"/>
    <property type="match status" value="1"/>
</dbReference>
<dbReference type="HAMAP" id="MF_01694">
    <property type="entry name" value="BioB"/>
    <property type="match status" value="1"/>
</dbReference>
<dbReference type="InterPro" id="IPR013785">
    <property type="entry name" value="Aldolase_TIM"/>
</dbReference>
<dbReference type="InterPro" id="IPR010722">
    <property type="entry name" value="BATS_dom"/>
</dbReference>
<dbReference type="InterPro" id="IPR002684">
    <property type="entry name" value="Biotin_synth/BioAB"/>
</dbReference>
<dbReference type="InterPro" id="IPR024177">
    <property type="entry name" value="Biotin_synthase"/>
</dbReference>
<dbReference type="InterPro" id="IPR006638">
    <property type="entry name" value="Elp3/MiaA/NifB-like_rSAM"/>
</dbReference>
<dbReference type="InterPro" id="IPR007197">
    <property type="entry name" value="rSAM"/>
</dbReference>
<dbReference type="NCBIfam" id="TIGR00433">
    <property type="entry name" value="bioB"/>
    <property type="match status" value="1"/>
</dbReference>
<dbReference type="PANTHER" id="PTHR22976">
    <property type="entry name" value="BIOTIN SYNTHASE"/>
    <property type="match status" value="1"/>
</dbReference>
<dbReference type="PANTHER" id="PTHR22976:SF2">
    <property type="entry name" value="BIOTIN SYNTHASE, MITOCHONDRIAL"/>
    <property type="match status" value="1"/>
</dbReference>
<dbReference type="Pfam" id="PF06968">
    <property type="entry name" value="BATS"/>
    <property type="match status" value="1"/>
</dbReference>
<dbReference type="Pfam" id="PF04055">
    <property type="entry name" value="Radical_SAM"/>
    <property type="match status" value="1"/>
</dbReference>
<dbReference type="PIRSF" id="PIRSF001619">
    <property type="entry name" value="Biotin_synth"/>
    <property type="match status" value="1"/>
</dbReference>
<dbReference type="SFLD" id="SFLDG01278">
    <property type="entry name" value="biotin_synthase_like"/>
    <property type="match status" value="1"/>
</dbReference>
<dbReference type="SFLD" id="SFLDS00029">
    <property type="entry name" value="Radical_SAM"/>
    <property type="match status" value="1"/>
</dbReference>
<dbReference type="SMART" id="SM00876">
    <property type="entry name" value="BATS"/>
    <property type="match status" value="1"/>
</dbReference>
<dbReference type="SMART" id="SM00729">
    <property type="entry name" value="Elp3"/>
    <property type="match status" value="1"/>
</dbReference>
<dbReference type="SUPFAM" id="SSF102114">
    <property type="entry name" value="Radical SAM enzymes"/>
    <property type="match status" value="1"/>
</dbReference>
<dbReference type="PROSITE" id="PS51918">
    <property type="entry name" value="RADICAL_SAM"/>
    <property type="match status" value="1"/>
</dbReference>
<reference key="1">
    <citation type="journal article" date="2004" name="J. Mol. Microbiol. Biotechnol.">
        <title>The complete genome sequence of Bacillus licheniformis DSM13, an organism with great industrial potential.</title>
        <authorList>
            <person name="Veith B."/>
            <person name="Herzberg C."/>
            <person name="Steckel S."/>
            <person name="Feesche J."/>
            <person name="Maurer K.H."/>
            <person name="Ehrenreich P."/>
            <person name="Baeumer S."/>
            <person name="Henne A."/>
            <person name="Liesegang H."/>
            <person name="Merkl R."/>
            <person name="Ehrenreich A."/>
            <person name="Gottschalk G."/>
        </authorList>
    </citation>
    <scope>NUCLEOTIDE SEQUENCE [LARGE SCALE GENOMIC DNA]</scope>
    <source>
        <strain>ATCC 14580 / DSM 13 / JCM 2505 / CCUG 7422 / NBRC 12200 / NCIMB 9375 / NCTC 10341 / NRRL NRS-1264 / Gibson 46</strain>
    </source>
</reference>
<reference key="2">
    <citation type="journal article" date="2004" name="Genome Biol.">
        <title>Complete genome sequence of the industrial bacterium Bacillus licheniformis and comparisons with closely related Bacillus species.</title>
        <authorList>
            <person name="Rey M.W."/>
            <person name="Ramaiya P."/>
            <person name="Nelson B.A."/>
            <person name="Brody-Karpin S.D."/>
            <person name="Zaretsky E.J."/>
            <person name="Tang M."/>
            <person name="Lopez de Leon A."/>
            <person name="Xiang H."/>
            <person name="Gusti V."/>
            <person name="Clausen I.G."/>
            <person name="Olsen P.B."/>
            <person name="Rasmussen M.D."/>
            <person name="Andersen J.T."/>
            <person name="Joergensen P.L."/>
            <person name="Larsen T.S."/>
            <person name="Sorokin A."/>
            <person name="Bolotin A."/>
            <person name="Lapidus A."/>
            <person name="Galleron N."/>
            <person name="Ehrlich S.D."/>
            <person name="Berka R.M."/>
        </authorList>
    </citation>
    <scope>NUCLEOTIDE SEQUENCE [LARGE SCALE GENOMIC DNA]</scope>
    <source>
        <strain>ATCC 14580 / DSM 13 / JCM 2505 / CCUG 7422 / NBRC 12200 / NCIMB 9375 / NCTC 10341 / NRRL NRS-1264 / Gibson 46</strain>
    </source>
</reference>
<protein>
    <recommendedName>
        <fullName evidence="1">Biotin synthase</fullName>
        <ecNumber evidence="1">2.8.1.6</ecNumber>
    </recommendedName>
</protein>
<gene>
    <name evidence="1" type="primary">bioB</name>
    <name type="ordered locus">BLi00770</name>
    <name type="ordered locus">BL00956</name>
</gene>
<proteinExistence type="inferred from homology"/>
<name>BIOB_BACLD</name>
<accession>Q65MK9</accession>
<accession>Q62Y02</accession>
<organism>
    <name type="scientific">Bacillus licheniformis (strain ATCC 14580 / DSM 13 / JCM 2505 / CCUG 7422 / NBRC 12200 / NCIMB 9375 / NCTC 10341 / NRRL NRS-1264 / Gibson 46)</name>
    <dbReference type="NCBI Taxonomy" id="279010"/>
    <lineage>
        <taxon>Bacteria</taxon>
        <taxon>Bacillati</taxon>
        <taxon>Bacillota</taxon>
        <taxon>Bacilli</taxon>
        <taxon>Bacillales</taxon>
        <taxon>Bacillaceae</taxon>
        <taxon>Bacillus</taxon>
    </lineage>
</organism>